<sequence length="110" mass="13186">MNTQNIVEKTHEKFSSTWSYLEQTSTDLKQNLRSRLLGLDSLLRELYKQETDEKKKMYIFYALMYVDSALDNLDYMNPEHDPFAVFQAKWAVQKAFEIFSDLFKDYFKSD</sequence>
<reference key="1">
    <citation type="journal article" date="2007" name="Virology">
        <title>Genome of the Acidianus bottle-shaped virus and insights into the replication and packaging mechanisms.</title>
        <authorList>
            <person name="Peng X."/>
            <person name="Basta T."/>
            <person name="Haring M."/>
            <person name="Garrett R.A."/>
            <person name="Prangishvili D."/>
        </authorList>
    </citation>
    <scope>NUCLEOTIDE SEQUENCE [GENOMIC DNA]</scope>
</reference>
<keyword id="KW-1185">Reference proteome</keyword>
<accession>A4ZU88</accession>
<name>Y110_ABVP</name>
<gene>
    <name type="ORF">ORF110</name>
</gene>
<feature type="chain" id="PRO_0000384851" description="Uncharacterized protein ORF110">
    <location>
        <begin position="1"/>
        <end position="110"/>
    </location>
</feature>
<protein>
    <recommendedName>
        <fullName>Uncharacterized protein ORF110</fullName>
    </recommendedName>
</protein>
<organismHost>
    <name type="scientific">Acidianus convivator</name>
    <dbReference type="NCBI Taxonomy" id="269667"/>
</organismHost>
<organism>
    <name type="scientific">Acidianus bottle-shaped virus (isolate Italy/Pozzuoli)</name>
    <name type="common">ABV</name>
    <dbReference type="NCBI Taxonomy" id="654911"/>
    <lineage>
        <taxon>Viruses</taxon>
        <taxon>Viruses incertae sedis</taxon>
        <taxon>Ampullaviridae</taxon>
        <taxon>Bottigliavirus</taxon>
        <taxon>Bottigliavirus ABV</taxon>
    </lineage>
</organism>
<proteinExistence type="predicted"/>
<dbReference type="EMBL" id="EF432053">
    <property type="protein sequence ID" value="ABP73392.1"/>
    <property type="molecule type" value="Genomic_DNA"/>
</dbReference>
<dbReference type="RefSeq" id="YP_001210306.1">
    <property type="nucleotide sequence ID" value="NC_009452.1"/>
</dbReference>
<dbReference type="SMR" id="A4ZU88"/>
<dbReference type="GeneID" id="5129851"/>
<dbReference type="KEGG" id="vg:5129851"/>
<dbReference type="Proteomes" id="UP000000513">
    <property type="component" value="Segment"/>
</dbReference>